<gene>
    <name evidence="1" type="primary">NA</name>
</gene>
<reference key="1">
    <citation type="journal article" date="1993" name="Virology">
        <title>Phylogenetic analysis of the N8 neuraminidase gene of influenza A viruses.</title>
        <authorList>
            <person name="Saito T."/>
            <person name="Kawaoka Y."/>
            <person name="Webster R.G."/>
        </authorList>
    </citation>
    <scope>NUCLEOTIDE SEQUENCE [GENOMIC RNA]</scope>
</reference>
<reference key="2">
    <citation type="journal article" date="2004" name="Virus Res.">
        <title>Assembly and budding of influenza virus.</title>
        <authorList>
            <person name="Nayak D.P."/>
            <person name="Hui E.K."/>
            <person name="Barman S."/>
        </authorList>
    </citation>
    <scope>REVIEW</scope>
</reference>
<reference key="3">
    <citation type="journal article" date="2005" name="N. Engl. J. Med.">
        <title>Neuraminidase inhibitors for influenza.</title>
        <authorList>
            <person name="Moscona A."/>
        </authorList>
    </citation>
    <scope>REVIEW</scope>
</reference>
<reference key="4">
    <citation type="journal article" date="2005" name="Biol. Pharm. Bull.">
        <title>Sialobiology of influenza: molecular mechanism of host range variation of influenza viruses.</title>
        <authorList>
            <person name="Suzuki Y."/>
        </authorList>
    </citation>
    <scope>REVIEW</scope>
</reference>
<sequence>MNPNQKIITIGSVSLGLVVLNILLHIVSITITVLVLPGNGNNGSCNGTVIREYNETVRIEKVTQWHNTNVIEYIERSESDHFMNNTEALCDAKGFAPFSKDNGIRIGSRGHVFVIREPFVSCSPTECRTFFLTQGSLLNDKHSNGTVKDRSPYRTLMSVEIGQSPNVYQARFEAVAWSATACHDGKKWMTIGVTGPDAKAVAVVHYGGIPTDVINSWAGDILRTQESSCTCIKGECYWVMTDGPANRQAQYRAFKAKQGKIIGQAEISFNGGHIEECSCYPNEGKVECVCRDNWTGTNRPVLVISPDLSYRVGYLCAGLPSDTPRGEDSQFTGSCTSPMGNQGYGVKGFGFRQGNDVWMGRTISRTSRSGFEILKVRNGWVQNSKEQIKRQVVVDNLNWSGYSGSFTLPVELTKRNCLVPCFWVEMIRGKPEEKTIWTSSSSIVMCGVDHEIADWSWHDGAILPFDIDKM</sequence>
<proteinExistence type="inferred from homology"/>
<comment type="function">
    <text evidence="1">Catalyzes the removal of terminal sialic acid residues from viral and cellular glycoconjugates. Cleaves off the terminal sialic acids on the glycosylated HA during virus budding to facilitate virus release. Additionally helps virus spread through the circulation by further removing sialic acids from the cell surface. These cleavages prevent self-aggregation and ensure the efficient spread of the progeny virus from cell to cell. Otherwise, infection would be limited to one round of replication. Described as a receptor-destroying enzyme because it cleaves a terminal sialic acid from the cellular receptors. May facilitate viral invasion of the upper airways by cleaving the sialic acid moieties on the mucin of the airway epithelial cells. Likely to plays a role in the budding process through its association with lipid rafts during intracellular transport. May additionally display a raft-association independent effect on budding. Plays a role in the determination of host range restriction on replication and virulence. Sialidase activity in late endosome/lysosome traffic seems to enhance virus replication.</text>
</comment>
<comment type="catalytic activity">
    <reaction evidence="1">
        <text>Hydrolysis of alpha-(2-&gt;3)-, alpha-(2-&gt;6)-, alpha-(2-&gt;8)- glycosidic linkages of terminal sialic acid residues in oligosaccharides, glycoproteins, glycolipids, colominic acid and synthetic substrates.</text>
        <dbReference type="EC" id="3.2.1.18"/>
    </reaction>
</comment>
<comment type="cofactor">
    <cofactor evidence="1">
        <name>Ca(2+)</name>
        <dbReference type="ChEBI" id="CHEBI:29108"/>
    </cofactor>
</comment>
<comment type="activity regulation">
    <text evidence="1">Inhibited by the neuraminidase inhibitors zanamivir (Relenza) and oseltamivir (Tamiflu). These drugs interfere with the release of progeny virus from infected cells and are effective against all influenza strains. Resistance to neuraminidase inhibitors is quite rare.</text>
</comment>
<comment type="subunit">
    <text evidence="1">Homotetramer.</text>
</comment>
<comment type="subcellular location">
    <subcellularLocation>
        <location evidence="1">Virion membrane</location>
    </subcellularLocation>
    <subcellularLocation>
        <location evidence="1">Host apical cell membrane</location>
        <topology evidence="1">Single-pass type II membrane protein</topology>
    </subcellularLocation>
    <text evidence="1">Preferentially accumulates at the apical plasma membrane in infected polarized epithelial cells, which is the virus assembly site. Uses lipid rafts for cell surface transport and apical sorting. In the virion, forms a mushroom-shaped spike on the surface of the membrane.</text>
</comment>
<comment type="domain">
    <text evidence="1">Intact N-terminus is essential for virion morphogenesis. Possesses two apical sorting signals, one in the ectodomain, which is likely to be a glycan, and the other in the transmembrane domain. The transmembrane domain also plays a role in lipid raft association.</text>
</comment>
<comment type="PTM">
    <text evidence="1">N-glycosylated.</text>
</comment>
<comment type="miscellaneous">
    <text>The influenza A genome consist of 8 RNA segments. Genetic variation of hemagglutinin and/or neuraminidase genes results in the emergence of new influenza strains. The mechanism of variation can be the result of point mutations or the result of genetic reassortment between segments of two different strains.</text>
</comment>
<comment type="similarity">
    <text evidence="1">Belongs to the glycosyl hydrolase 34 family.</text>
</comment>
<dbReference type="EC" id="3.2.1.18" evidence="1"/>
<dbReference type="EMBL" id="L06586">
    <property type="protein sequence ID" value="AAA43369.1"/>
    <property type="molecule type" value="Genomic_RNA"/>
</dbReference>
<dbReference type="SMR" id="Q07583"/>
<dbReference type="CAZy" id="GH34">
    <property type="family name" value="Glycoside Hydrolase Family 34"/>
</dbReference>
<dbReference type="GlyCosmos" id="Q07583">
    <property type="glycosylation" value="7 sites, No reported glycans"/>
</dbReference>
<dbReference type="GO" id="GO:0020002">
    <property type="term" value="C:host cell plasma membrane"/>
    <property type="evidence" value="ECO:0007669"/>
    <property type="project" value="UniProtKB-SubCell"/>
</dbReference>
<dbReference type="GO" id="GO:0016020">
    <property type="term" value="C:membrane"/>
    <property type="evidence" value="ECO:0007669"/>
    <property type="project" value="UniProtKB-UniRule"/>
</dbReference>
<dbReference type="GO" id="GO:0055036">
    <property type="term" value="C:virion membrane"/>
    <property type="evidence" value="ECO:0007669"/>
    <property type="project" value="UniProtKB-SubCell"/>
</dbReference>
<dbReference type="GO" id="GO:0004308">
    <property type="term" value="F:exo-alpha-sialidase activity"/>
    <property type="evidence" value="ECO:0007669"/>
    <property type="project" value="UniProtKB-UniRule"/>
</dbReference>
<dbReference type="GO" id="GO:0046872">
    <property type="term" value="F:metal ion binding"/>
    <property type="evidence" value="ECO:0007669"/>
    <property type="project" value="UniProtKB-UniRule"/>
</dbReference>
<dbReference type="GO" id="GO:0005975">
    <property type="term" value="P:carbohydrate metabolic process"/>
    <property type="evidence" value="ECO:0007669"/>
    <property type="project" value="InterPro"/>
</dbReference>
<dbReference type="GO" id="GO:0046761">
    <property type="term" value="P:viral budding from plasma membrane"/>
    <property type="evidence" value="ECO:0007669"/>
    <property type="project" value="UniProtKB-UniRule"/>
</dbReference>
<dbReference type="Gene3D" id="2.120.10.10">
    <property type="match status" value="1"/>
</dbReference>
<dbReference type="HAMAP" id="MF_04071">
    <property type="entry name" value="INFV_NRAM"/>
    <property type="match status" value="1"/>
</dbReference>
<dbReference type="InterPro" id="IPR001860">
    <property type="entry name" value="Glyco_hydro_34"/>
</dbReference>
<dbReference type="InterPro" id="IPR036278">
    <property type="entry name" value="Sialidase_sf"/>
</dbReference>
<dbReference type="Pfam" id="PF00064">
    <property type="entry name" value="Neur"/>
    <property type="match status" value="1"/>
</dbReference>
<dbReference type="SUPFAM" id="SSF50939">
    <property type="entry name" value="Sialidases"/>
    <property type="match status" value="1"/>
</dbReference>
<protein>
    <recommendedName>
        <fullName evidence="1">Neuraminidase</fullName>
        <ecNumber evidence="1">3.2.1.18</ecNumber>
    </recommendedName>
</protein>
<organismHost>
    <name type="scientific">Aves</name>
    <dbReference type="NCBI Taxonomy" id="8782"/>
</organismHost>
<organismHost>
    <name type="scientific">Equus caballus</name>
    <name type="common">Horse</name>
    <dbReference type="NCBI Taxonomy" id="9796"/>
</organismHost>
<keyword id="KW-0106">Calcium</keyword>
<keyword id="KW-1015">Disulfide bond</keyword>
<keyword id="KW-0325">Glycoprotein</keyword>
<keyword id="KW-0326">Glycosidase</keyword>
<keyword id="KW-1032">Host cell membrane</keyword>
<keyword id="KW-1043">Host membrane</keyword>
<keyword id="KW-0378">Hydrolase</keyword>
<keyword id="KW-0472">Membrane</keyword>
<keyword id="KW-0479">Metal-binding</keyword>
<keyword id="KW-0735">Signal-anchor</keyword>
<keyword id="KW-0812">Transmembrane</keyword>
<keyword id="KW-1133">Transmembrane helix</keyword>
<keyword id="KW-0946">Virion</keyword>
<name>NRAM_I90A1</name>
<organism>
    <name type="scientific">Influenza A virus (strain A/Mallard/Edmonton/220/1990 H3N8)</name>
    <dbReference type="NCBI Taxonomy" id="387244"/>
    <lineage>
        <taxon>Viruses</taxon>
        <taxon>Riboviria</taxon>
        <taxon>Orthornavirae</taxon>
        <taxon>Negarnaviricota</taxon>
        <taxon>Polyploviricotina</taxon>
        <taxon>Insthoviricetes</taxon>
        <taxon>Articulavirales</taxon>
        <taxon>Orthomyxoviridae</taxon>
        <taxon>Alphainfluenzavirus</taxon>
        <taxon>Alphainfluenzavirus influenzae</taxon>
        <taxon>Influenza A virus</taxon>
    </lineage>
</organism>
<accession>Q07583</accession>
<evidence type="ECO:0000255" key="1">
    <source>
        <dbReference type="HAMAP-Rule" id="MF_04071"/>
    </source>
</evidence>
<feature type="chain" id="PRO_0000078706" description="Neuraminidase">
    <location>
        <begin position="1"/>
        <end position="470"/>
    </location>
</feature>
<feature type="topological domain" description="Intravirion" evidence="1">
    <location>
        <begin position="1"/>
        <end position="14"/>
    </location>
</feature>
<feature type="transmembrane region" description="Helical" evidence="1">
    <location>
        <begin position="15"/>
        <end position="35"/>
    </location>
</feature>
<feature type="topological domain" description="Virion surface" evidence="1">
    <location>
        <begin position="36"/>
        <end position="470"/>
    </location>
</feature>
<feature type="region of interest" description="Involved in apical transport and lipid raft association" evidence="1">
    <location>
        <begin position="11"/>
        <end position="32"/>
    </location>
</feature>
<feature type="region of interest" description="Hypervariable stalk region" evidence="1">
    <location>
        <begin position="32"/>
        <end position="86"/>
    </location>
</feature>
<feature type="region of interest" description="Head of neuraminidase" evidence="1">
    <location>
        <begin position="89"/>
        <end position="470"/>
    </location>
</feature>
<feature type="active site" description="Proton donor/acceptor" evidence="1">
    <location>
        <position position="149"/>
    </location>
</feature>
<feature type="active site" description="Nucleophile" evidence="1">
    <location>
        <position position="402"/>
    </location>
</feature>
<feature type="binding site" evidence="1">
    <location>
        <position position="116"/>
    </location>
    <ligand>
        <name>substrate</name>
    </ligand>
</feature>
<feature type="binding site" evidence="1">
    <location>
        <position position="150"/>
    </location>
    <ligand>
        <name>substrate</name>
    </ligand>
</feature>
<feature type="binding site" evidence="1">
    <location>
        <begin position="275"/>
        <end position="276"/>
    </location>
    <ligand>
        <name>substrate</name>
    </ligand>
</feature>
<feature type="binding site" evidence="1">
    <location>
        <position position="291"/>
    </location>
    <ligand>
        <name>substrate</name>
    </ligand>
</feature>
<feature type="binding site" evidence="1">
    <location>
        <position position="292"/>
    </location>
    <ligand>
        <name>Ca(2+)</name>
        <dbReference type="ChEBI" id="CHEBI:29108"/>
    </ligand>
</feature>
<feature type="binding site" evidence="1">
    <location>
        <position position="296"/>
    </location>
    <ligand>
        <name>Ca(2+)</name>
        <dbReference type="ChEBI" id="CHEBI:29108"/>
    </ligand>
</feature>
<feature type="binding site" evidence="1">
    <location>
        <position position="322"/>
    </location>
    <ligand>
        <name>Ca(2+)</name>
        <dbReference type="ChEBI" id="CHEBI:29108"/>
    </ligand>
</feature>
<feature type="binding site" evidence="1">
    <location>
        <position position="368"/>
    </location>
    <ligand>
        <name>substrate</name>
    </ligand>
</feature>
<feature type="glycosylation site" description="N-linked (GlcNAc...) asparagine; by host" evidence="1">
    <location>
        <position position="42"/>
    </location>
</feature>
<feature type="glycosylation site" description="N-linked (GlcNAc...) asparagine; by host" evidence="1">
    <location>
        <position position="46"/>
    </location>
</feature>
<feature type="glycosylation site" description="N-linked (GlcNAc...) asparagine; by host" evidence="1">
    <location>
        <position position="54"/>
    </location>
</feature>
<feature type="glycosylation site" description="N-linked (GlcNAc...) asparagine; by host" evidence="1">
    <location>
        <position position="84"/>
    </location>
</feature>
<feature type="glycosylation site" description="N-linked (GlcNAc...) asparagine; by host" evidence="1">
    <location>
        <position position="144"/>
    </location>
</feature>
<feature type="glycosylation site" description="N-linked (GlcNAc...) asparagine; by host" evidence="1">
    <location>
        <position position="293"/>
    </location>
</feature>
<feature type="glycosylation site" description="N-linked (GlcNAc...) asparagine; by host" evidence="1">
    <location>
        <position position="398"/>
    </location>
</feature>
<feature type="disulfide bond" evidence="1">
    <location>
        <begin position="90"/>
        <end position="417"/>
    </location>
</feature>
<feature type="disulfide bond" evidence="1">
    <location>
        <begin position="122"/>
        <end position="127"/>
    </location>
</feature>
<feature type="disulfide bond" evidence="1">
    <location>
        <begin position="182"/>
        <end position="229"/>
    </location>
</feature>
<feature type="disulfide bond" evidence="1">
    <location>
        <begin position="231"/>
        <end position="236"/>
    </location>
</feature>
<feature type="disulfide bond" evidence="1">
    <location>
        <begin position="277"/>
        <end position="290"/>
    </location>
</feature>
<feature type="disulfide bond" evidence="1">
    <location>
        <begin position="279"/>
        <end position="288"/>
    </location>
</feature>
<feature type="disulfide bond" evidence="1">
    <location>
        <begin position="316"/>
        <end position="335"/>
    </location>
</feature>
<feature type="disulfide bond" evidence="1">
    <location>
        <begin position="421"/>
        <end position="446"/>
    </location>
</feature>